<sequence>MGALYNEDYDATDMTETRLLAIPLQAYVYRTFSNVMRSASEHLDDKYAQEAHEESETIRAHWEALETRYEVPDWSKEDFDVSEGITNVDTAVRLAESAERFVRQTNLELSANQLLRLLHYRSMQERQWELETRSYLNDLINLVEDPADQKRIDDVLMPWFANKPFMVELTTEELTQLRKKIEDAIKNTNVQKSARQALKKYPLLSTFSSNGSRRGRSNKHRVVH</sequence>
<proteinExistence type="predicted"/>
<name>REP1_LACFM</name>
<reference key="1">
    <citation type="journal article" date="1987" name="J. Bacteriol.">
        <title>Yeast plasmids resembling 2 micron DNA: regional similarities and diversities at the molecular level.</title>
        <authorList>
            <person name="Utatsu I."/>
            <person name="Sakamoto S."/>
            <person name="Imura T."/>
            <person name="Toh-e A."/>
        </authorList>
    </citation>
    <scope>NUCLEOTIDE SEQUENCE [GENOMIC DNA]</scope>
    <source>
        <strain>NBRC 0021</strain>
    </source>
</reference>
<feature type="chain" id="PRO_0000150896" description="Trans-acting factor B">
    <location>
        <begin position="1"/>
        <end position="224"/>
    </location>
</feature>
<comment type="function">
    <text>Plasmid partition require REP1, REP2, and a cis-acting DNA sequence (known as STB). REP1 may act by intercalating in the yeast nuclear matrix and binding STB either directly or via REP2.</text>
</comment>
<accession>P13741</accession>
<organism>
    <name type="scientific">Lachancea fermentati</name>
    <name type="common">Zygosaccharomyces fermentati</name>
    <dbReference type="NCBI Taxonomy" id="4955"/>
    <lineage>
        <taxon>Eukaryota</taxon>
        <taxon>Fungi</taxon>
        <taxon>Dikarya</taxon>
        <taxon>Ascomycota</taxon>
        <taxon>Saccharomycotina</taxon>
        <taxon>Saccharomycetes</taxon>
        <taxon>Saccharomycetales</taxon>
        <taxon>Saccharomycetaceae</taxon>
        <taxon>Lachancea</taxon>
    </lineage>
</organism>
<geneLocation type="plasmid">
    <name>pSM1</name>
</geneLocation>
<protein>
    <recommendedName>
        <fullName>Trans-acting factor B</fullName>
    </recommendedName>
    <alternativeName>
        <fullName>REP1</fullName>
    </alternativeName>
</protein>
<keyword id="KW-0614">Plasmid</keyword>
<keyword id="KW-0616">Plasmid partition</keyword>
<gene>
    <name type="primary">B</name>
</gene>
<dbReference type="EMBL" id="M18275">
    <property type="protein sequence ID" value="AAA35277.1"/>
    <property type="molecule type" value="Genomic_DNA"/>
</dbReference>
<dbReference type="RefSeq" id="NP_040493.1">
    <property type="nucleotide sequence ID" value="NC_002054.1"/>
</dbReference>
<dbReference type="GO" id="GO:0030541">
    <property type="term" value="P:plasmid partitioning"/>
    <property type="evidence" value="ECO:0007669"/>
    <property type="project" value="UniProtKB-KW"/>
</dbReference>